<sequence>MIQQESRLRVADNTGAREILCIRVLGGSTRRFAGIGDVIVATVKEATPGGNVKAGEVVKAVIVRAKKETRRPDGSYIKFDENAAVLIKNDNEPRGTRIFGPVARELRDKKFMKIVSLAPEVI</sequence>
<accession>Q6NJC2</accession>
<feature type="chain" id="PRO_0000266472" description="Large ribosomal subunit protein uL14">
    <location>
        <begin position="1"/>
        <end position="122"/>
    </location>
</feature>
<proteinExistence type="inferred from homology"/>
<dbReference type="EMBL" id="BX248355">
    <property type="protein sequence ID" value="CAE48996.1"/>
    <property type="molecule type" value="Genomic_DNA"/>
</dbReference>
<dbReference type="RefSeq" id="WP_004566763.1">
    <property type="nucleotide sequence ID" value="NC_002935.2"/>
</dbReference>
<dbReference type="SMR" id="Q6NJC2"/>
<dbReference type="STRING" id="257309.DIP0486"/>
<dbReference type="GeneID" id="97331089"/>
<dbReference type="KEGG" id="cdi:DIP0486"/>
<dbReference type="HOGENOM" id="CLU_095071_2_1_11"/>
<dbReference type="Proteomes" id="UP000002198">
    <property type="component" value="Chromosome"/>
</dbReference>
<dbReference type="GO" id="GO:0022625">
    <property type="term" value="C:cytosolic large ribosomal subunit"/>
    <property type="evidence" value="ECO:0007669"/>
    <property type="project" value="TreeGrafter"/>
</dbReference>
<dbReference type="GO" id="GO:0070180">
    <property type="term" value="F:large ribosomal subunit rRNA binding"/>
    <property type="evidence" value="ECO:0007669"/>
    <property type="project" value="TreeGrafter"/>
</dbReference>
<dbReference type="GO" id="GO:0003735">
    <property type="term" value="F:structural constituent of ribosome"/>
    <property type="evidence" value="ECO:0007669"/>
    <property type="project" value="InterPro"/>
</dbReference>
<dbReference type="GO" id="GO:0006412">
    <property type="term" value="P:translation"/>
    <property type="evidence" value="ECO:0007669"/>
    <property type="project" value="UniProtKB-UniRule"/>
</dbReference>
<dbReference type="CDD" id="cd00337">
    <property type="entry name" value="Ribosomal_uL14"/>
    <property type="match status" value="1"/>
</dbReference>
<dbReference type="FunFam" id="2.40.150.20:FF:000001">
    <property type="entry name" value="50S ribosomal protein L14"/>
    <property type="match status" value="1"/>
</dbReference>
<dbReference type="Gene3D" id="2.40.150.20">
    <property type="entry name" value="Ribosomal protein L14"/>
    <property type="match status" value="1"/>
</dbReference>
<dbReference type="HAMAP" id="MF_01367">
    <property type="entry name" value="Ribosomal_uL14"/>
    <property type="match status" value="1"/>
</dbReference>
<dbReference type="InterPro" id="IPR000218">
    <property type="entry name" value="Ribosomal_uL14"/>
</dbReference>
<dbReference type="InterPro" id="IPR005745">
    <property type="entry name" value="Ribosomal_uL14_bac-type"/>
</dbReference>
<dbReference type="InterPro" id="IPR019972">
    <property type="entry name" value="Ribosomal_uL14_CS"/>
</dbReference>
<dbReference type="InterPro" id="IPR036853">
    <property type="entry name" value="Ribosomal_uL14_sf"/>
</dbReference>
<dbReference type="NCBIfam" id="TIGR01067">
    <property type="entry name" value="rplN_bact"/>
    <property type="match status" value="1"/>
</dbReference>
<dbReference type="PANTHER" id="PTHR11761">
    <property type="entry name" value="50S/60S RIBOSOMAL PROTEIN L14/L23"/>
    <property type="match status" value="1"/>
</dbReference>
<dbReference type="PANTHER" id="PTHR11761:SF3">
    <property type="entry name" value="LARGE RIBOSOMAL SUBUNIT PROTEIN UL14M"/>
    <property type="match status" value="1"/>
</dbReference>
<dbReference type="Pfam" id="PF00238">
    <property type="entry name" value="Ribosomal_L14"/>
    <property type="match status" value="1"/>
</dbReference>
<dbReference type="SMART" id="SM01374">
    <property type="entry name" value="Ribosomal_L14"/>
    <property type="match status" value="1"/>
</dbReference>
<dbReference type="SUPFAM" id="SSF50193">
    <property type="entry name" value="Ribosomal protein L14"/>
    <property type="match status" value="1"/>
</dbReference>
<dbReference type="PROSITE" id="PS00049">
    <property type="entry name" value="RIBOSOMAL_L14"/>
    <property type="match status" value="1"/>
</dbReference>
<evidence type="ECO:0000255" key="1">
    <source>
        <dbReference type="HAMAP-Rule" id="MF_01367"/>
    </source>
</evidence>
<evidence type="ECO:0000305" key="2"/>
<organism>
    <name type="scientific">Corynebacterium diphtheriae (strain ATCC 700971 / NCTC 13129 / Biotype gravis)</name>
    <dbReference type="NCBI Taxonomy" id="257309"/>
    <lineage>
        <taxon>Bacteria</taxon>
        <taxon>Bacillati</taxon>
        <taxon>Actinomycetota</taxon>
        <taxon>Actinomycetes</taxon>
        <taxon>Mycobacteriales</taxon>
        <taxon>Corynebacteriaceae</taxon>
        <taxon>Corynebacterium</taxon>
    </lineage>
</organism>
<name>RL14_CORDI</name>
<protein>
    <recommendedName>
        <fullName evidence="1">Large ribosomal subunit protein uL14</fullName>
    </recommendedName>
    <alternativeName>
        <fullName evidence="2">50S ribosomal protein L14</fullName>
    </alternativeName>
</protein>
<reference key="1">
    <citation type="journal article" date="2003" name="Nucleic Acids Res.">
        <title>The complete genome sequence and analysis of Corynebacterium diphtheriae NCTC13129.</title>
        <authorList>
            <person name="Cerdeno-Tarraga A.-M."/>
            <person name="Efstratiou A."/>
            <person name="Dover L.G."/>
            <person name="Holden M.T.G."/>
            <person name="Pallen M.J."/>
            <person name="Bentley S.D."/>
            <person name="Besra G.S."/>
            <person name="Churcher C.M."/>
            <person name="James K.D."/>
            <person name="De Zoysa A."/>
            <person name="Chillingworth T."/>
            <person name="Cronin A."/>
            <person name="Dowd L."/>
            <person name="Feltwell T."/>
            <person name="Hamlin N."/>
            <person name="Holroyd S."/>
            <person name="Jagels K."/>
            <person name="Moule S."/>
            <person name="Quail M.A."/>
            <person name="Rabbinowitsch E."/>
            <person name="Rutherford K.M."/>
            <person name="Thomson N.R."/>
            <person name="Unwin L."/>
            <person name="Whitehead S."/>
            <person name="Barrell B.G."/>
            <person name="Parkhill J."/>
        </authorList>
    </citation>
    <scope>NUCLEOTIDE SEQUENCE [LARGE SCALE GENOMIC DNA]</scope>
    <source>
        <strain>ATCC 700971 / NCTC 13129 / Biotype gravis</strain>
    </source>
</reference>
<comment type="function">
    <text evidence="1">Binds to 23S rRNA. Forms part of two intersubunit bridges in the 70S ribosome.</text>
</comment>
<comment type="subunit">
    <text evidence="1">Part of the 50S ribosomal subunit. Forms a cluster with proteins L3 and L19. In the 70S ribosome, L14 and L19 interact and together make contacts with the 16S rRNA in bridges B5 and B8.</text>
</comment>
<comment type="similarity">
    <text evidence="1">Belongs to the universal ribosomal protein uL14 family.</text>
</comment>
<keyword id="KW-1185">Reference proteome</keyword>
<keyword id="KW-0687">Ribonucleoprotein</keyword>
<keyword id="KW-0689">Ribosomal protein</keyword>
<keyword id="KW-0694">RNA-binding</keyword>
<keyword id="KW-0699">rRNA-binding</keyword>
<gene>
    <name evidence="1" type="primary">rplN</name>
    <name type="ordered locus">DIP0486</name>
</gene>